<reference key="1">
    <citation type="submission" date="2003-03" db="EMBL/GenBank/DDBJ databases">
        <title>The complete genome sequence of Neisseria gonorrhoeae.</title>
        <authorList>
            <person name="Lewis L.A."/>
            <person name="Gillaspy A.F."/>
            <person name="McLaughlin R.E."/>
            <person name="Gipson M."/>
            <person name="Ducey T.F."/>
            <person name="Ownbey T."/>
            <person name="Hartman K."/>
            <person name="Nydick C."/>
            <person name="Carson M.B."/>
            <person name="Vaughn J."/>
            <person name="Thomson C."/>
            <person name="Song L."/>
            <person name="Lin S."/>
            <person name="Yuan X."/>
            <person name="Najar F."/>
            <person name="Zhan M."/>
            <person name="Ren Q."/>
            <person name="Zhu H."/>
            <person name="Qi S."/>
            <person name="Kenton S.M."/>
            <person name="Lai H."/>
            <person name="White J.D."/>
            <person name="Clifton S."/>
            <person name="Roe B.A."/>
            <person name="Dyer D.W."/>
        </authorList>
    </citation>
    <scope>NUCLEOTIDE SEQUENCE [LARGE SCALE GENOMIC DNA]</scope>
    <source>
        <strain>ATCC 700825 / FA 1090</strain>
    </source>
</reference>
<sequence length="373" mass="40602">MSNQDFYATLGVARAATDDEIKKAYRKLAMKYHPDRNPDNKEAEEKFKEVQKAYETLSDKEKRAMYDQYGHAAFEGGGQGGFGGFGGFGGAQGFDFGDIFSQMFGGGSGRAQPDYQGEDVQVGIEITLEEAAKGVKKRINIPTYEACDVCNGSGAKPGASPETCPTCKGSGTVHIQQAIFRMQQTCPTCRGAGKHIKEPCVKCRGVGRNKAVKTVEVNIPAGIDDGQRIRLSGEGGPGMHGAPAGDLYVTVRIRAHKIFQRDGLDLHCELPISFAMAALGGELEVPTLDGKVKLTVPKETQTGRRMRVKGKGVKSLRSSATGDLYCHIVVETPVNLTDRQKELLEEFERISTGLENQTPRKKSFLDKLRDLFD</sequence>
<keyword id="KW-0143">Chaperone</keyword>
<keyword id="KW-0963">Cytoplasm</keyword>
<keyword id="KW-0235">DNA replication</keyword>
<keyword id="KW-0479">Metal-binding</keyword>
<keyword id="KW-1185">Reference proteome</keyword>
<keyword id="KW-0677">Repeat</keyword>
<keyword id="KW-0346">Stress response</keyword>
<keyword id="KW-0862">Zinc</keyword>
<keyword id="KW-0863">Zinc-finger</keyword>
<name>DNAJ_NEIG1</name>
<gene>
    <name evidence="1" type="primary">dnaJ</name>
    <name type="ordered locus">NGO_1901</name>
</gene>
<protein>
    <recommendedName>
        <fullName evidence="1">Chaperone protein DnaJ</fullName>
    </recommendedName>
</protein>
<proteinExistence type="inferred from homology"/>
<accession>Q5F5M1</accession>
<organism>
    <name type="scientific">Neisseria gonorrhoeae (strain ATCC 700825 / FA 1090)</name>
    <dbReference type="NCBI Taxonomy" id="242231"/>
    <lineage>
        <taxon>Bacteria</taxon>
        <taxon>Pseudomonadati</taxon>
        <taxon>Pseudomonadota</taxon>
        <taxon>Betaproteobacteria</taxon>
        <taxon>Neisseriales</taxon>
        <taxon>Neisseriaceae</taxon>
        <taxon>Neisseria</taxon>
    </lineage>
</organism>
<evidence type="ECO:0000255" key="1">
    <source>
        <dbReference type="HAMAP-Rule" id="MF_01152"/>
    </source>
</evidence>
<comment type="function">
    <text evidence="1">Participates actively in the response to hyperosmotic and heat shock by preventing the aggregation of stress-denatured proteins and by disaggregating proteins, also in an autonomous, DnaK-independent fashion. Unfolded proteins bind initially to DnaJ; upon interaction with the DnaJ-bound protein, DnaK hydrolyzes its bound ATP, resulting in the formation of a stable complex. GrpE releases ADP from DnaK; ATP binding to DnaK triggers the release of the substrate protein, thus completing the reaction cycle. Several rounds of ATP-dependent interactions between DnaJ, DnaK and GrpE are required for fully efficient folding. Also involved, together with DnaK and GrpE, in the DNA replication of plasmids through activation of initiation proteins.</text>
</comment>
<comment type="cofactor">
    <cofactor evidence="1">
        <name>Zn(2+)</name>
        <dbReference type="ChEBI" id="CHEBI:29105"/>
    </cofactor>
    <text evidence="1">Binds 2 Zn(2+) ions per monomer.</text>
</comment>
<comment type="subunit">
    <text evidence="1">Homodimer.</text>
</comment>
<comment type="subcellular location">
    <subcellularLocation>
        <location evidence="1">Cytoplasm</location>
    </subcellularLocation>
</comment>
<comment type="domain">
    <text evidence="1">The J domain is necessary and sufficient to stimulate DnaK ATPase activity. Zinc center 1 plays an important role in the autonomous, DnaK-independent chaperone activity of DnaJ. Zinc center 2 is essential for interaction with DnaK and for DnaJ activity.</text>
</comment>
<comment type="similarity">
    <text evidence="1">Belongs to the DnaJ family.</text>
</comment>
<feature type="chain" id="PRO_0000070838" description="Chaperone protein DnaJ">
    <location>
        <begin position="1"/>
        <end position="373"/>
    </location>
</feature>
<feature type="domain" description="J" evidence="1">
    <location>
        <begin position="5"/>
        <end position="70"/>
    </location>
</feature>
<feature type="repeat" description="CXXCXGXG motif">
    <location>
        <begin position="147"/>
        <end position="154"/>
    </location>
</feature>
<feature type="repeat" description="CXXCXGXG motif">
    <location>
        <begin position="164"/>
        <end position="171"/>
    </location>
</feature>
<feature type="repeat" description="CXXCXGXG motif">
    <location>
        <begin position="186"/>
        <end position="193"/>
    </location>
</feature>
<feature type="repeat" description="CXXCXGXG motif">
    <location>
        <begin position="200"/>
        <end position="207"/>
    </location>
</feature>
<feature type="zinc finger region" description="CR-type" evidence="1">
    <location>
        <begin position="134"/>
        <end position="212"/>
    </location>
</feature>
<feature type="binding site" evidence="1">
    <location>
        <position position="147"/>
    </location>
    <ligand>
        <name>Zn(2+)</name>
        <dbReference type="ChEBI" id="CHEBI:29105"/>
        <label>1</label>
    </ligand>
</feature>
<feature type="binding site" evidence="1">
    <location>
        <position position="150"/>
    </location>
    <ligand>
        <name>Zn(2+)</name>
        <dbReference type="ChEBI" id="CHEBI:29105"/>
        <label>1</label>
    </ligand>
</feature>
<feature type="binding site" evidence="1">
    <location>
        <position position="164"/>
    </location>
    <ligand>
        <name>Zn(2+)</name>
        <dbReference type="ChEBI" id="CHEBI:29105"/>
        <label>2</label>
    </ligand>
</feature>
<feature type="binding site" evidence="1">
    <location>
        <position position="167"/>
    </location>
    <ligand>
        <name>Zn(2+)</name>
        <dbReference type="ChEBI" id="CHEBI:29105"/>
        <label>2</label>
    </ligand>
</feature>
<feature type="binding site" evidence="1">
    <location>
        <position position="186"/>
    </location>
    <ligand>
        <name>Zn(2+)</name>
        <dbReference type="ChEBI" id="CHEBI:29105"/>
        <label>2</label>
    </ligand>
</feature>
<feature type="binding site" evidence="1">
    <location>
        <position position="189"/>
    </location>
    <ligand>
        <name>Zn(2+)</name>
        <dbReference type="ChEBI" id="CHEBI:29105"/>
        <label>2</label>
    </ligand>
</feature>
<feature type="binding site" evidence="1">
    <location>
        <position position="200"/>
    </location>
    <ligand>
        <name>Zn(2+)</name>
        <dbReference type="ChEBI" id="CHEBI:29105"/>
        <label>1</label>
    </ligand>
</feature>
<feature type="binding site" evidence="1">
    <location>
        <position position="203"/>
    </location>
    <ligand>
        <name>Zn(2+)</name>
        <dbReference type="ChEBI" id="CHEBI:29105"/>
        <label>1</label>
    </ligand>
</feature>
<dbReference type="EMBL" id="AE004969">
    <property type="protein sequence ID" value="AAW90516.1"/>
    <property type="molecule type" value="Genomic_DNA"/>
</dbReference>
<dbReference type="RefSeq" id="WP_010951367.1">
    <property type="nucleotide sequence ID" value="NC_002946.2"/>
</dbReference>
<dbReference type="RefSeq" id="YP_208928.1">
    <property type="nucleotide sequence ID" value="NC_002946.2"/>
</dbReference>
<dbReference type="SMR" id="Q5F5M1"/>
<dbReference type="STRING" id="242231.NGO_1901"/>
<dbReference type="KEGG" id="ngo:NGO_1901"/>
<dbReference type="PATRIC" id="fig|242231.10.peg.2284"/>
<dbReference type="HOGENOM" id="CLU_017633_0_7_4"/>
<dbReference type="Proteomes" id="UP000000535">
    <property type="component" value="Chromosome"/>
</dbReference>
<dbReference type="GO" id="GO:0005737">
    <property type="term" value="C:cytoplasm"/>
    <property type="evidence" value="ECO:0007669"/>
    <property type="project" value="UniProtKB-SubCell"/>
</dbReference>
<dbReference type="GO" id="GO:0005524">
    <property type="term" value="F:ATP binding"/>
    <property type="evidence" value="ECO:0007669"/>
    <property type="project" value="InterPro"/>
</dbReference>
<dbReference type="GO" id="GO:0031072">
    <property type="term" value="F:heat shock protein binding"/>
    <property type="evidence" value="ECO:0007669"/>
    <property type="project" value="InterPro"/>
</dbReference>
<dbReference type="GO" id="GO:0051082">
    <property type="term" value="F:unfolded protein binding"/>
    <property type="evidence" value="ECO:0007669"/>
    <property type="project" value="UniProtKB-UniRule"/>
</dbReference>
<dbReference type="GO" id="GO:0008270">
    <property type="term" value="F:zinc ion binding"/>
    <property type="evidence" value="ECO:0007669"/>
    <property type="project" value="UniProtKB-UniRule"/>
</dbReference>
<dbReference type="GO" id="GO:0051085">
    <property type="term" value="P:chaperone cofactor-dependent protein refolding"/>
    <property type="evidence" value="ECO:0007669"/>
    <property type="project" value="TreeGrafter"/>
</dbReference>
<dbReference type="GO" id="GO:0006260">
    <property type="term" value="P:DNA replication"/>
    <property type="evidence" value="ECO:0007669"/>
    <property type="project" value="UniProtKB-KW"/>
</dbReference>
<dbReference type="GO" id="GO:0042026">
    <property type="term" value="P:protein refolding"/>
    <property type="evidence" value="ECO:0007669"/>
    <property type="project" value="TreeGrafter"/>
</dbReference>
<dbReference type="GO" id="GO:0009408">
    <property type="term" value="P:response to heat"/>
    <property type="evidence" value="ECO:0007669"/>
    <property type="project" value="InterPro"/>
</dbReference>
<dbReference type="CDD" id="cd06257">
    <property type="entry name" value="DnaJ"/>
    <property type="match status" value="1"/>
</dbReference>
<dbReference type="CDD" id="cd10747">
    <property type="entry name" value="DnaJ_C"/>
    <property type="match status" value="1"/>
</dbReference>
<dbReference type="CDD" id="cd10719">
    <property type="entry name" value="DnaJ_zf"/>
    <property type="match status" value="1"/>
</dbReference>
<dbReference type="FunFam" id="1.10.287.110:FF:000099">
    <property type="entry name" value="Chaperone protein DnaJ"/>
    <property type="match status" value="1"/>
</dbReference>
<dbReference type="FunFam" id="2.10.230.10:FF:000002">
    <property type="entry name" value="Molecular chaperone DnaJ"/>
    <property type="match status" value="1"/>
</dbReference>
<dbReference type="FunFam" id="2.60.260.20:FF:000004">
    <property type="entry name" value="Molecular chaperone DnaJ"/>
    <property type="match status" value="1"/>
</dbReference>
<dbReference type="Gene3D" id="1.10.287.110">
    <property type="entry name" value="DnaJ domain"/>
    <property type="match status" value="1"/>
</dbReference>
<dbReference type="Gene3D" id="2.10.230.10">
    <property type="entry name" value="Heat shock protein DnaJ, cysteine-rich domain"/>
    <property type="match status" value="1"/>
</dbReference>
<dbReference type="Gene3D" id="2.60.260.20">
    <property type="entry name" value="Urease metallochaperone UreE, N-terminal domain"/>
    <property type="match status" value="2"/>
</dbReference>
<dbReference type="HAMAP" id="MF_01152">
    <property type="entry name" value="DnaJ"/>
    <property type="match status" value="1"/>
</dbReference>
<dbReference type="InterPro" id="IPR012724">
    <property type="entry name" value="DnaJ"/>
</dbReference>
<dbReference type="InterPro" id="IPR002939">
    <property type="entry name" value="DnaJ_C"/>
</dbReference>
<dbReference type="InterPro" id="IPR001623">
    <property type="entry name" value="DnaJ_domain"/>
</dbReference>
<dbReference type="InterPro" id="IPR018253">
    <property type="entry name" value="DnaJ_domain_CS"/>
</dbReference>
<dbReference type="InterPro" id="IPR008971">
    <property type="entry name" value="HSP40/DnaJ_pept-bd"/>
</dbReference>
<dbReference type="InterPro" id="IPR001305">
    <property type="entry name" value="HSP_DnaJ_Cys-rich_dom"/>
</dbReference>
<dbReference type="InterPro" id="IPR036410">
    <property type="entry name" value="HSP_DnaJ_Cys-rich_dom_sf"/>
</dbReference>
<dbReference type="InterPro" id="IPR036869">
    <property type="entry name" value="J_dom_sf"/>
</dbReference>
<dbReference type="NCBIfam" id="TIGR02349">
    <property type="entry name" value="DnaJ_bact"/>
    <property type="match status" value="1"/>
</dbReference>
<dbReference type="NCBIfam" id="NF008035">
    <property type="entry name" value="PRK10767.1"/>
    <property type="match status" value="1"/>
</dbReference>
<dbReference type="PANTHER" id="PTHR43096:SF48">
    <property type="entry name" value="CHAPERONE PROTEIN DNAJ"/>
    <property type="match status" value="1"/>
</dbReference>
<dbReference type="PANTHER" id="PTHR43096">
    <property type="entry name" value="DNAJ HOMOLOG 1, MITOCHONDRIAL-RELATED"/>
    <property type="match status" value="1"/>
</dbReference>
<dbReference type="Pfam" id="PF00226">
    <property type="entry name" value="DnaJ"/>
    <property type="match status" value="1"/>
</dbReference>
<dbReference type="Pfam" id="PF01556">
    <property type="entry name" value="DnaJ_C"/>
    <property type="match status" value="1"/>
</dbReference>
<dbReference type="Pfam" id="PF00684">
    <property type="entry name" value="DnaJ_CXXCXGXG"/>
    <property type="match status" value="1"/>
</dbReference>
<dbReference type="PRINTS" id="PR00625">
    <property type="entry name" value="JDOMAIN"/>
</dbReference>
<dbReference type="SMART" id="SM00271">
    <property type="entry name" value="DnaJ"/>
    <property type="match status" value="1"/>
</dbReference>
<dbReference type="SUPFAM" id="SSF46565">
    <property type="entry name" value="Chaperone J-domain"/>
    <property type="match status" value="1"/>
</dbReference>
<dbReference type="SUPFAM" id="SSF57938">
    <property type="entry name" value="DnaJ/Hsp40 cysteine-rich domain"/>
    <property type="match status" value="1"/>
</dbReference>
<dbReference type="SUPFAM" id="SSF49493">
    <property type="entry name" value="HSP40/DnaJ peptide-binding domain"/>
    <property type="match status" value="2"/>
</dbReference>
<dbReference type="PROSITE" id="PS00636">
    <property type="entry name" value="DNAJ_1"/>
    <property type="match status" value="1"/>
</dbReference>
<dbReference type="PROSITE" id="PS50076">
    <property type="entry name" value="DNAJ_2"/>
    <property type="match status" value="1"/>
</dbReference>
<dbReference type="PROSITE" id="PS51188">
    <property type="entry name" value="ZF_CR"/>
    <property type="match status" value="1"/>
</dbReference>